<protein>
    <recommendedName>
        <fullName evidence="1">4-hydroxy-tetrahydrodipicolinate synthase</fullName>
        <shortName evidence="1">HTPA synthase</shortName>
        <ecNumber evidence="1">4.3.3.7</ecNumber>
    </recommendedName>
</protein>
<accession>Q07M65</accession>
<evidence type="ECO:0000255" key="1">
    <source>
        <dbReference type="HAMAP-Rule" id="MF_00418"/>
    </source>
</evidence>
<evidence type="ECO:0000305" key="2"/>
<proteinExistence type="inferred from homology"/>
<reference key="1">
    <citation type="submission" date="2006-09" db="EMBL/GenBank/DDBJ databases">
        <title>Complete sequence of Rhodopseudomonas palustris BisA53.</title>
        <authorList>
            <consortium name="US DOE Joint Genome Institute"/>
            <person name="Copeland A."/>
            <person name="Lucas S."/>
            <person name="Lapidus A."/>
            <person name="Barry K."/>
            <person name="Detter J.C."/>
            <person name="Glavina del Rio T."/>
            <person name="Hammon N."/>
            <person name="Israni S."/>
            <person name="Dalin E."/>
            <person name="Tice H."/>
            <person name="Pitluck S."/>
            <person name="Chain P."/>
            <person name="Malfatti S."/>
            <person name="Shin M."/>
            <person name="Vergez L."/>
            <person name="Schmutz J."/>
            <person name="Larimer F."/>
            <person name="Land M."/>
            <person name="Hauser L."/>
            <person name="Pelletier D.A."/>
            <person name="Kyrpides N."/>
            <person name="Kim E."/>
            <person name="Harwood C.S."/>
            <person name="Oda Y."/>
            <person name="Richardson P."/>
        </authorList>
    </citation>
    <scope>NUCLEOTIDE SEQUENCE [LARGE SCALE GENOMIC DNA]</scope>
    <source>
        <strain>BisA53</strain>
    </source>
</reference>
<comment type="function">
    <text evidence="1">Catalyzes the condensation of (S)-aspartate-beta-semialdehyde [(S)-ASA] and pyruvate to 4-hydroxy-tetrahydrodipicolinate (HTPA).</text>
</comment>
<comment type="catalytic activity">
    <reaction evidence="1">
        <text>L-aspartate 4-semialdehyde + pyruvate = (2S,4S)-4-hydroxy-2,3,4,5-tetrahydrodipicolinate + H2O + H(+)</text>
        <dbReference type="Rhea" id="RHEA:34171"/>
        <dbReference type="ChEBI" id="CHEBI:15361"/>
        <dbReference type="ChEBI" id="CHEBI:15377"/>
        <dbReference type="ChEBI" id="CHEBI:15378"/>
        <dbReference type="ChEBI" id="CHEBI:67139"/>
        <dbReference type="ChEBI" id="CHEBI:537519"/>
        <dbReference type="EC" id="4.3.3.7"/>
    </reaction>
</comment>
<comment type="pathway">
    <text evidence="1">Amino-acid biosynthesis; L-lysine biosynthesis via DAP pathway; (S)-tetrahydrodipicolinate from L-aspartate: step 3/4.</text>
</comment>
<comment type="subunit">
    <text evidence="1">Homotetramer; dimer of dimers.</text>
</comment>
<comment type="subcellular location">
    <subcellularLocation>
        <location evidence="1">Cytoplasm</location>
    </subcellularLocation>
</comment>
<comment type="similarity">
    <text evidence="1">Belongs to the DapA family.</text>
</comment>
<comment type="caution">
    <text evidence="2">Was originally thought to be a dihydrodipicolinate synthase (DHDPS), catalyzing the condensation of (S)-aspartate-beta-semialdehyde [(S)-ASA] and pyruvate to dihydrodipicolinate (DHDP). However, it was shown in E.coli that the product of the enzymatic reaction is not dihydrodipicolinate but in fact (4S)-4-hydroxy-2,3,4,5-tetrahydro-(2S)-dipicolinic acid (HTPA), and that the consecutive dehydration reaction leading to DHDP is not spontaneous but catalyzed by DapB.</text>
</comment>
<keyword id="KW-0028">Amino-acid biosynthesis</keyword>
<keyword id="KW-0963">Cytoplasm</keyword>
<keyword id="KW-0220">Diaminopimelate biosynthesis</keyword>
<keyword id="KW-0456">Lyase</keyword>
<keyword id="KW-0457">Lysine biosynthesis</keyword>
<keyword id="KW-0704">Schiff base</keyword>
<name>DAPA_RHOP5</name>
<gene>
    <name evidence="1" type="primary">dapA</name>
    <name type="ordered locus">RPE_3032</name>
</gene>
<sequence>MAATPAFRGSFTALVTPFKNGSLDEEAFRKLVNWQIAEGTTGLVPVGTTGESPTLSHDEHHKVVEWCVEEAKGRVPVIAGAGSNSTTEAVELAKHAEKAGADAVLVVTPYYNKPTQEGMYLHFKAINDAIGIPIIIYNIPPRSVVDMSVDTMSRLYELQNIVGVKDATANLGRVSQQRHAMGPDFIQLSGEDMTALAYMAAGGHGCISVVSNVAPKACSDLMAAVFKGDYAGALKIQDRLVPLHDAVFKEPGVSGAKHGLTLLGRIQEEVRLPLIPVSAPTGQAIRSAMIHAGLLN</sequence>
<organism>
    <name type="scientific">Rhodopseudomonas palustris (strain BisA53)</name>
    <dbReference type="NCBI Taxonomy" id="316055"/>
    <lineage>
        <taxon>Bacteria</taxon>
        <taxon>Pseudomonadati</taxon>
        <taxon>Pseudomonadota</taxon>
        <taxon>Alphaproteobacteria</taxon>
        <taxon>Hyphomicrobiales</taxon>
        <taxon>Nitrobacteraceae</taxon>
        <taxon>Rhodopseudomonas</taxon>
    </lineage>
</organism>
<feature type="chain" id="PRO_1000050253" description="4-hydroxy-tetrahydrodipicolinate synthase">
    <location>
        <begin position="1"/>
        <end position="296"/>
    </location>
</feature>
<feature type="active site" description="Proton donor/acceptor" evidence="1">
    <location>
        <position position="137"/>
    </location>
</feature>
<feature type="active site" description="Schiff-base intermediate with substrate" evidence="1">
    <location>
        <position position="165"/>
    </location>
</feature>
<feature type="binding site" evidence="1">
    <location>
        <position position="49"/>
    </location>
    <ligand>
        <name>pyruvate</name>
        <dbReference type="ChEBI" id="CHEBI:15361"/>
    </ligand>
</feature>
<feature type="binding site" evidence="1">
    <location>
        <position position="207"/>
    </location>
    <ligand>
        <name>pyruvate</name>
        <dbReference type="ChEBI" id="CHEBI:15361"/>
    </ligand>
</feature>
<feature type="site" description="Part of a proton relay during catalysis" evidence="1">
    <location>
        <position position="48"/>
    </location>
</feature>
<feature type="site" description="Part of a proton relay during catalysis" evidence="1">
    <location>
        <position position="111"/>
    </location>
</feature>
<dbReference type="EC" id="4.3.3.7" evidence="1"/>
<dbReference type="EMBL" id="CP000463">
    <property type="protein sequence ID" value="ABJ06969.1"/>
    <property type="molecule type" value="Genomic_DNA"/>
</dbReference>
<dbReference type="SMR" id="Q07M65"/>
<dbReference type="STRING" id="316055.RPE_3032"/>
<dbReference type="KEGG" id="rpe:RPE_3032"/>
<dbReference type="eggNOG" id="COG0329">
    <property type="taxonomic scope" value="Bacteria"/>
</dbReference>
<dbReference type="HOGENOM" id="CLU_049343_7_1_5"/>
<dbReference type="OrthoDB" id="9782828at2"/>
<dbReference type="UniPathway" id="UPA00034">
    <property type="reaction ID" value="UER00017"/>
</dbReference>
<dbReference type="GO" id="GO:0005829">
    <property type="term" value="C:cytosol"/>
    <property type="evidence" value="ECO:0007669"/>
    <property type="project" value="TreeGrafter"/>
</dbReference>
<dbReference type="GO" id="GO:0008840">
    <property type="term" value="F:4-hydroxy-tetrahydrodipicolinate synthase activity"/>
    <property type="evidence" value="ECO:0007669"/>
    <property type="project" value="UniProtKB-UniRule"/>
</dbReference>
<dbReference type="GO" id="GO:0019877">
    <property type="term" value="P:diaminopimelate biosynthetic process"/>
    <property type="evidence" value="ECO:0007669"/>
    <property type="project" value="UniProtKB-UniRule"/>
</dbReference>
<dbReference type="GO" id="GO:0009089">
    <property type="term" value="P:lysine biosynthetic process via diaminopimelate"/>
    <property type="evidence" value="ECO:0007669"/>
    <property type="project" value="UniProtKB-UniRule"/>
</dbReference>
<dbReference type="CDD" id="cd00950">
    <property type="entry name" value="DHDPS"/>
    <property type="match status" value="1"/>
</dbReference>
<dbReference type="Gene3D" id="3.20.20.70">
    <property type="entry name" value="Aldolase class I"/>
    <property type="match status" value="1"/>
</dbReference>
<dbReference type="HAMAP" id="MF_00418">
    <property type="entry name" value="DapA"/>
    <property type="match status" value="1"/>
</dbReference>
<dbReference type="InterPro" id="IPR013785">
    <property type="entry name" value="Aldolase_TIM"/>
</dbReference>
<dbReference type="InterPro" id="IPR005263">
    <property type="entry name" value="DapA"/>
</dbReference>
<dbReference type="InterPro" id="IPR002220">
    <property type="entry name" value="DapA-like"/>
</dbReference>
<dbReference type="InterPro" id="IPR020625">
    <property type="entry name" value="Schiff_base-form_aldolases_AS"/>
</dbReference>
<dbReference type="InterPro" id="IPR020624">
    <property type="entry name" value="Schiff_base-form_aldolases_CS"/>
</dbReference>
<dbReference type="NCBIfam" id="TIGR00674">
    <property type="entry name" value="dapA"/>
    <property type="match status" value="1"/>
</dbReference>
<dbReference type="PANTHER" id="PTHR12128:SF66">
    <property type="entry name" value="4-HYDROXY-2-OXOGLUTARATE ALDOLASE, MITOCHONDRIAL"/>
    <property type="match status" value="1"/>
</dbReference>
<dbReference type="PANTHER" id="PTHR12128">
    <property type="entry name" value="DIHYDRODIPICOLINATE SYNTHASE"/>
    <property type="match status" value="1"/>
</dbReference>
<dbReference type="Pfam" id="PF00701">
    <property type="entry name" value="DHDPS"/>
    <property type="match status" value="1"/>
</dbReference>
<dbReference type="PIRSF" id="PIRSF001365">
    <property type="entry name" value="DHDPS"/>
    <property type="match status" value="1"/>
</dbReference>
<dbReference type="PRINTS" id="PR00146">
    <property type="entry name" value="DHPICSNTHASE"/>
</dbReference>
<dbReference type="SMART" id="SM01130">
    <property type="entry name" value="DHDPS"/>
    <property type="match status" value="1"/>
</dbReference>
<dbReference type="SUPFAM" id="SSF51569">
    <property type="entry name" value="Aldolase"/>
    <property type="match status" value="1"/>
</dbReference>
<dbReference type="PROSITE" id="PS00665">
    <property type="entry name" value="DHDPS_1"/>
    <property type="match status" value="1"/>
</dbReference>
<dbReference type="PROSITE" id="PS00666">
    <property type="entry name" value="DHDPS_2"/>
    <property type="match status" value="1"/>
</dbReference>